<name>VATA1_ACEAT</name>
<reference key="1">
    <citation type="online journal article" date="1995" name="Plant Gene Register">
        <title>Molecular cloning of cDNAs encoding Acetabularia acetabulum V type ATPase, A subunit.</title>
        <authorList>
            <person name="Konishi K."/>
            <person name="Moritani C."/>
            <person name="Rahman H."/>
            <person name="Kadowaki H."/>
            <person name="Ohmori S."/>
            <person name="de Groot E.J."/>
            <person name="Oesterhelt D."/>
            <person name="Ikeda M."/>
        </authorList>
        <locator>PGR95-042</locator>
    </citation>
    <scope>NUCLEOTIDE SEQUENCE [MRNA]</scope>
</reference>
<dbReference type="EC" id="7.1.2.2"/>
<dbReference type="EMBL" id="D50528">
    <property type="protein sequence ID" value="BAA09097.1"/>
    <property type="molecule type" value="mRNA"/>
</dbReference>
<dbReference type="SMR" id="Q38676"/>
<dbReference type="GO" id="GO:0000325">
    <property type="term" value="C:plant-type vacuole"/>
    <property type="evidence" value="ECO:0007669"/>
    <property type="project" value="TreeGrafter"/>
</dbReference>
<dbReference type="GO" id="GO:0033180">
    <property type="term" value="C:proton-transporting V-type ATPase, V1 domain"/>
    <property type="evidence" value="ECO:0007669"/>
    <property type="project" value="InterPro"/>
</dbReference>
<dbReference type="GO" id="GO:0005524">
    <property type="term" value="F:ATP binding"/>
    <property type="evidence" value="ECO:0007669"/>
    <property type="project" value="UniProtKB-KW"/>
</dbReference>
<dbReference type="GO" id="GO:0016887">
    <property type="term" value="F:ATP hydrolysis activity"/>
    <property type="evidence" value="ECO:0007669"/>
    <property type="project" value="InterPro"/>
</dbReference>
<dbReference type="GO" id="GO:0046961">
    <property type="term" value="F:proton-transporting ATPase activity, rotational mechanism"/>
    <property type="evidence" value="ECO:0007669"/>
    <property type="project" value="InterPro"/>
</dbReference>
<dbReference type="GO" id="GO:0046034">
    <property type="term" value="P:ATP metabolic process"/>
    <property type="evidence" value="ECO:0007669"/>
    <property type="project" value="InterPro"/>
</dbReference>
<dbReference type="CDD" id="cd18111">
    <property type="entry name" value="ATP-synt_V_A-type_alpha_C"/>
    <property type="match status" value="1"/>
</dbReference>
<dbReference type="CDD" id="cd18119">
    <property type="entry name" value="ATP-synt_V_A-type_alpha_N"/>
    <property type="match status" value="1"/>
</dbReference>
<dbReference type="CDD" id="cd01134">
    <property type="entry name" value="V_A-ATPase_A"/>
    <property type="match status" value="1"/>
</dbReference>
<dbReference type="FunFam" id="1.10.1140.10:FF:000002">
    <property type="entry name" value="V-type proton ATPase catalytic subunit A"/>
    <property type="match status" value="1"/>
</dbReference>
<dbReference type="FunFam" id="2.40.30.20:FF:000002">
    <property type="entry name" value="V-type proton ATPase catalytic subunit A"/>
    <property type="match status" value="1"/>
</dbReference>
<dbReference type="FunFam" id="2.40.50.100:FF:000008">
    <property type="entry name" value="V-type proton ATPase catalytic subunit A"/>
    <property type="match status" value="1"/>
</dbReference>
<dbReference type="FunFam" id="3.40.50.300:FF:000052">
    <property type="entry name" value="V-type proton ATPase catalytic subunit A"/>
    <property type="match status" value="1"/>
</dbReference>
<dbReference type="Gene3D" id="2.40.30.20">
    <property type="match status" value="1"/>
</dbReference>
<dbReference type="Gene3D" id="2.40.50.100">
    <property type="match status" value="1"/>
</dbReference>
<dbReference type="Gene3D" id="1.10.1140.10">
    <property type="entry name" value="Bovine Mitochondrial F1-atpase, Atp Synthase Beta Chain, Chain D, domain 3"/>
    <property type="match status" value="1"/>
</dbReference>
<dbReference type="Gene3D" id="3.40.50.300">
    <property type="entry name" value="P-loop containing nucleotide triphosphate hydrolases"/>
    <property type="match status" value="1"/>
</dbReference>
<dbReference type="HAMAP" id="MF_00309">
    <property type="entry name" value="ATP_synth_A_arch"/>
    <property type="match status" value="1"/>
</dbReference>
<dbReference type="InterPro" id="IPR055190">
    <property type="entry name" value="ATP-synt_VA_C"/>
</dbReference>
<dbReference type="InterPro" id="IPR031686">
    <property type="entry name" value="ATP-synth_a_Xtn"/>
</dbReference>
<dbReference type="InterPro" id="IPR023366">
    <property type="entry name" value="ATP_synth_asu-like_sf"/>
</dbReference>
<dbReference type="InterPro" id="IPR020003">
    <property type="entry name" value="ATPase_a/bsu_AS"/>
</dbReference>
<dbReference type="InterPro" id="IPR004100">
    <property type="entry name" value="ATPase_F1/V1/A1_a/bsu_N"/>
</dbReference>
<dbReference type="InterPro" id="IPR036121">
    <property type="entry name" value="ATPase_F1/V1/A1_a/bsu_N_sf"/>
</dbReference>
<dbReference type="InterPro" id="IPR000194">
    <property type="entry name" value="ATPase_F1/V1/A1_a/bsu_nucl-bd"/>
</dbReference>
<dbReference type="InterPro" id="IPR024034">
    <property type="entry name" value="ATPase_F1/V1_b/a_C"/>
</dbReference>
<dbReference type="InterPro" id="IPR005725">
    <property type="entry name" value="ATPase_V1-cplx_asu"/>
</dbReference>
<dbReference type="InterPro" id="IPR027417">
    <property type="entry name" value="P-loop_NTPase"/>
</dbReference>
<dbReference type="InterPro" id="IPR022878">
    <property type="entry name" value="V-ATPase_asu"/>
</dbReference>
<dbReference type="NCBIfam" id="NF003220">
    <property type="entry name" value="PRK04192.1"/>
    <property type="match status" value="1"/>
</dbReference>
<dbReference type="NCBIfam" id="TIGR01042">
    <property type="entry name" value="V-ATPase_V1_A"/>
    <property type="match status" value="1"/>
</dbReference>
<dbReference type="PANTHER" id="PTHR43607:SF1">
    <property type="entry name" value="H(+)-TRANSPORTING TWO-SECTOR ATPASE"/>
    <property type="match status" value="1"/>
</dbReference>
<dbReference type="PANTHER" id="PTHR43607">
    <property type="entry name" value="V-TYPE PROTON ATPASE CATALYTIC SUBUNIT A"/>
    <property type="match status" value="1"/>
</dbReference>
<dbReference type="Pfam" id="PF00006">
    <property type="entry name" value="ATP-synt_ab"/>
    <property type="match status" value="1"/>
</dbReference>
<dbReference type="Pfam" id="PF02874">
    <property type="entry name" value="ATP-synt_ab_N"/>
    <property type="match status" value="1"/>
</dbReference>
<dbReference type="Pfam" id="PF16886">
    <property type="entry name" value="ATP-synt_ab_Xtn"/>
    <property type="match status" value="1"/>
</dbReference>
<dbReference type="Pfam" id="PF22919">
    <property type="entry name" value="ATP-synt_VA_C"/>
    <property type="match status" value="1"/>
</dbReference>
<dbReference type="SUPFAM" id="SSF47917">
    <property type="entry name" value="C-terminal domain of alpha and beta subunits of F1 ATP synthase"/>
    <property type="match status" value="1"/>
</dbReference>
<dbReference type="SUPFAM" id="SSF50615">
    <property type="entry name" value="N-terminal domain of alpha and beta subunits of F1 ATP synthase"/>
    <property type="match status" value="1"/>
</dbReference>
<dbReference type="SUPFAM" id="SSF52540">
    <property type="entry name" value="P-loop containing nucleoside triphosphate hydrolases"/>
    <property type="match status" value="1"/>
</dbReference>
<dbReference type="PROSITE" id="PS00152">
    <property type="entry name" value="ATPASE_ALPHA_BETA"/>
    <property type="match status" value="1"/>
</dbReference>
<comment type="function">
    <text>Catalytic subunit of the peripheral V1 complex of vacuolar ATPase. V-ATPase vacuolar ATPase is responsible for acidifying a variety of intracellular compartments in eukaryotic cells.</text>
</comment>
<comment type="catalytic activity">
    <reaction>
        <text>ATP + H2O + 4 H(+)(in) = ADP + phosphate + 5 H(+)(out)</text>
        <dbReference type="Rhea" id="RHEA:57720"/>
        <dbReference type="ChEBI" id="CHEBI:15377"/>
        <dbReference type="ChEBI" id="CHEBI:15378"/>
        <dbReference type="ChEBI" id="CHEBI:30616"/>
        <dbReference type="ChEBI" id="CHEBI:43474"/>
        <dbReference type="ChEBI" id="CHEBI:456216"/>
        <dbReference type="EC" id="7.1.2.2"/>
    </reaction>
</comment>
<comment type="subunit">
    <text>V-ATPase is a heteromultimeric enzyme composed of a peripheral catalytic V1 complex (main components: subunits A, B, C, D, E, and F) attached to an integral membrane V0 proton pore complex (main component: the proteolipid protein).</text>
</comment>
<comment type="similarity">
    <text evidence="2">Belongs to the ATPase alpha/beta chains family.</text>
</comment>
<proteinExistence type="evidence at transcript level"/>
<keyword id="KW-0067">ATP-binding</keyword>
<keyword id="KW-0375">Hydrogen ion transport</keyword>
<keyword id="KW-0406">Ion transport</keyword>
<keyword id="KW-0547">Nucleotide-binding</keyword>
<keyword id="KW-1278">Translocase</keyword>
<keyword id="KW-0813">Transport</keyword>
<evidence type="ECO:0000255" key="1"/>
<evidence type="ECO:0000305" key="2"/>
<feature type="chain" id="PRO_0000144572" description="V-type proton ATPase catalytic subunit A isoform 1">
    <location>
        <begin position="1"/>
        <end position="613"/>
    </location>
</feature>
<feature type="binding site" evidence="1">
    <location>
        <begin position="240"/>
        <end position="247"/>
    </location>
    <ligand>
        <name>ATP</name>
        <dbReference type="ChEBI" id="CHEBI:30616"/>
    </ligand>
</feature>
<accession>Q38676</accession>
<sequence>MSKAKEGDYGSIKKVSGPVVVADNMGGSAMYELVRVGTGELIGEIIRLEGDTATIQVYEETSGLTVGDGVLRTKQPLSVDLGPGILGNIFDGIQRPLKAIADVSGDVFIPRGVNVPSLDQTKQWEFRPSAFKVGDRVTGGDIIGIVPENSLLDHKVMLLPQAKGTVTYIAAPGNYTINEKIIEVEFQGAKYEYSMKQSWPVRSPRPVVEKLLADTPLLTGQRVLDSLFPGVRGGTCAIPGAFGCGKTVISQALSKYSNSDGIVYVGCGERGNEMAEVLMDFPQLTMTMPDGREESIMKRTTLVANTSNMPVAAREASIYTGITLSEYFRDMGYNFAMMADSTSRWAEALREISGRLAEMPADSGYPAYLGARLASFYERSGRVACIGSPEREGSVTIVGAVSPPGGDFSDPVTSATLGIVQVFWGLDKKLAQRKHFPSVNWLISYSKYLNALEPFYEKFDSDFVTLRQVAREVLQKEDELNEIVQLVGKDALAESDKIILETARFLKEDYLQQNSFTKYDKYCPFYKSVGMMRNIVTFHRLATQAIERTAAGNVDGQKITFNIIKAKLGDLLYKVSSQKFEDPSDGEGVVTAHLNELNEELKEKFRALEDEYR</sequence>
<organism>
    <name type="scientific">Acetabularia acetabulum</name>
    <name type="common">Mermaid's wine glass</name>
    <name type="synonym">Acetabularia mediterranea</name>
    <dbReference type="NCBI Taxonomy" id="35845"/>
    <lineage>
        <taxon>Eukaryota</taxon>
        <taxon>Viridiplantae</taxon>
        <taxon>Chlorophyta</taxon>
        <taxon>Ulvophyceae</taxon>
        <taxon>TCBD clade</taxon>
        <taxon>Dasycladales</taxon>
        <taxon>Polyphysaceae</taxon>
        <taxon>Acetabularia</taxon>
    </lineage>
</organism>
<protein>
    <recommendedName>
        <fullName>V-type proton ATPase catalytic subunit A isoform 1</fullName>
        <shortName>V-ATPase subunit A 1</shortName>
        <ecNumber>7.1.2.2</ecNumber>
    </recommendedName>
    <alternativeName>
        <fullName>V-ATPase 69 kDa subunit 1</fullName>
    </alternativeName>
    <alternativeName>
        <fullName>Vacuolar proton pump subunit alpha 1</fullName>
    </alternativeName>
</protein>